<accession>P9WEJ5</accession>
<accession>A0AAT9JGK1</accession>
<protein>
    <recommendedName>
        <fullName evidence="2">Uncharacterized protein YDL204W-A</fullName>
    </recommendedName>
</protein>
<sequence length="50" mass="5803">MLYGNCCVKMVKNPGLPYERQCKDDCISQKDIFTPGAAREQNNYEKWTQS</sequence>
<name>YD204_YEAST</name>
<dbReference type="EMBL" id="BK006938">
    <property type="protein sequence ID" value="DBA54437.1"/>
    <property type="molecule type" value="Genomic_DNA"/>
</dbReference>
<dbReference type="RefSeq" id="NP_001418066.1">
    <property type="nucleotide sequence ID" value="NM_001431137.1"/>
</dbReference>
<dbReference type="GeneID" id="91000621"/>
<dbReference type="SGD" id="S000350096">
    <property type="gene designation" value="YDL204W-A"/>
</dbReference>
<dbReference type="Proteomes" id="UP000002311">
    <property type="component" value="Chromosome IV"/>
</dbReference>
<reference key="1">
    <citation type="journal article" date="1997" name="Nature">
        <title>The nucleotide sequence of Saccharomyces cerevisiae chromosome IV.</title>
        <authorList>
            <person name="Jacq C."/>
            <person name="Alt-Moerbe J."/>
            <person name="Andre B."/>
            <person name="Arnold W."/>
            <person name="Bahr A."/>
            <person name="Ballesta J.P.G."/>
            <person name="Bargues M."/>
            <person name="Baron L."/>
            <person name="Becker A."/>
            <person name="Biteau N."/>
            <person name="Bloecker H."/>
            <person name="Blugeon C."/>
            <person name="Boskovic J."/>
            <person name="Brandt P."/>
            <person name="Brueckner M."/>
            <person name="Buitrago M.J."/>
            <person name="Coster F."/>
            <person name="Delaveau T."/>
            <person name="del Rey F."/>
            <person name="Dujon B."/>
            <person name="Eide L.G."/>
            <person name="Garcia-Cantalejo J.M."/>
            <person name="Goffeau A."/>
            <person name="Gomez-Peris A."/>
            <person name="Granotier C."/>
            <person name="Hanemann V."/>
            <person name="Hankeln T."/>
            <person name="Hoheisel J.D."/>
            <person name="Jaeger W."/>
            <person name="Jimenez A."/>
            <person name="Jonniaux J.-L."/>
            <person name="Kraemer C."/>
            <person name="Kuester H."/>
            <person name="Laamanen P."/>
            <person name="Legros Y."/>
            <person name="Louis E.J."/>
            <person name="Moeller-Rieker S."/>
            <person name="Monnet A."/>
            <person name="Moro M."/>
            <person name="Mueller-Auer S."/>
            <person name="Nussbaumer B."/>
            <person name="Paricio N."/>
            <person name="Paulin L."/>
            <person name="Perea J."/>
            <person name="Perez-Alonso M."/>
            <person name="Perez-Ortin J.E."/>
            <person name="Pohl T.M."/>
            <person name="Prydz H."/>
            <person name="Purnelle B."/>
            <person name="Rasmussen S.W."/>
            <person name="Remacha M.A."/>
            <person name="Revuelta J.L."/>
            <person name="Rieger M."/>
            <person name="Salom D."/>
            <person name="Saluz H.P."/>
            <person name="Saiz J.E."/>
            <person name="Saren A.-M."/>
            <person name="Schaefer M."/>
            <person name="Scharfe M."/>
            <person name="Schmidt E.R."/>
            <person name="Schneider C."/>
            <person name="Scholler P."/>
            <person name="Schwarz S."/>
            <person name="Soler-Mira A."/>
            <person name="Urrestarazu L.A."/>
            <person name="Verhasselt P."/>
            <person name="Vissers S."/>
            <person name="Voet M."/>
            <person name="Volckaert G."/>
            <person name="Wagner G."/>
            <person name="Wambutt R."/>
            <person name="Wedler E."/>
            <person name="Wedler H."/>
            <person name="Woelfl S."/>
            <person name="Harris D.E."/>
            <person name="Bowman S."/>
            <person name="Brown D."/>
            <person name="Churcher C.M."/>
            <person name="Connor R."/>
            <person name="Dedman K."/>
            <person name="Gentles S."/>
            <person name="Hamlin N."/>
            <person name="Hunt S."/>
            <person name="Jones L."/>
            <person name="McDonald S."/>
            <person name="Murphy L.D."/>
            <person name="Niblett D."/>
            <person name="Odell C."/>
            <person name="Oliver K."/>
            <person name="Rajandream M.A."/>
            <person name="Richards C."/>
            <person name="Shore L."/>
            <person name="Walsh S.V."/>
            <person name="Barrell B.G."/>
            <person name="Dietrich F.S."/>
            <person name="Mulligan J.T."/>
            <person name="Allen E."/>
            <person name="Araujo R."/>
            <person name="Aviles E."/>
            <person name="Berno A."/>
            <person name="Carpenter J."/>
            <person name="Chen E."/>
            <person name="Cherry J.M."/>
            <person name="Chung E."/>
            <person name="Duncan M."/>
            <person name="Hunicke-Smith S."/>
            <person name="Hyman R.W."/>
            <person name="Komp C."/>
            <person name="Lashkari D."/>
            <person name="Lew H."/>
            <person name="Lin D."/>
            <person name="Mosedale D."/>
            <person name="Nakahara K."/>
            <person name="Namath A."/>
            <person name="Oefner P."/>
            <person name="Oh C."/>
            <person name="Petel F.X."/>
            <person name="Roberts D."/>
            <person name="Schramm S."/>
            <person name="Schroeder M."/>
            <person name="Shogren T."/>
            <person name="Shroff N."/>
            <person name="Winant A."/>
            <person name="Yelton M.A."/>
            <person name="Botstein D."/>
            <person name="Davis R.W."/>
            <person name="Johnston M."/>
            <person name="Andrews S."/>
            <person name="Brinkman R."/>
            <person name="Cooper J."/>
            <person name="Ding H."/>
            <person name="Du Z."/>
            <person name="Favello A."/>
            <person name="Fulton L."/>
            <person name="Gattung S."/>
            <person name="Greco T."/>
            <person name="Hallsworth K."/>
            <person name="Hawkins J."/>
            <person name="Hillier L.W."/>
            <person name="Jier M."/>
            <person name="Johnson D."/>
            <person name="Johnston L."/>
            <person name="Kirsten J."/>
            <person name="Kucaba T."/>
            <person name="Langston Y."/>
            <person name="Latreille P."/>
            <person name="Le T."/>
            <person name="Mardis E."/>
            <person name="Menezes S."/>
            <person name="Miller N."/>
            <person name="Nhan M."/>
            <person name="Pauley A."/>
            <person name="Peluso D."/>
            <person name="Rifkin L."/>
            <person name="Riles L."/>
            <person name="Taich A."/>
            <person name="Trevaskis E."/>
            <person name="Vignati D."/>
            <person name="Wilcox L."/>
            <person name="Wohldman P."/>
            <person name="Vaudin M."/>
            <person name="Wilson R."/>
            <person name="Waterston R."/>
            <person name="Albermann K."/>
            <person name="Hani J."/>
            <person name="Heumann K."/>
            <person name="Kleine K."/>
            <person name="Mewes H.-W."/>
            <person name="Zollner A."/>
            <person name="Zaccaria P."/>
        </authorList>
    </citation>
    <scope>NUCLEOTIDE SEQUENCE [LARGE SCALE GENOMIC DNA]</scope>
    <source>
        <strain>ATCC 204508 / S288c</strain>
    </source>
</reference>
<reference key="2">
    <citation type="journal article" date="2014" name="G3 (Bethesda)">
        <title>The reference genome sequence of Saccharomyces cerevisiae: Then and now.</title>
        <authorList>
            <person name="Engel S.R."/>
            <person name="Dietrich F.S."/>
            <person name="Fisk D.G."/>
            <person name="Binkley G."/>
            <person name="Balakrishnan R."/>
            <person name="Costanzo M.C."/>
            <person name="Dwight S.S."/>
            <person name="Hitz B.C."/>
            <person name="Karra K."/>
            <person name="Nash R.S."/>
            <person name="Weng S."/>
            <person name="Wong E.D."/>
            <person name="Lloyd P."/>
            <person name="Skrzypek M.S."/>
            <person name="Miyasato S.R."/>
            <person name="Simison M."/>
            <person name="Cherry J.M."/>
        </authorList>
    </citation>
    <scope>GENOME REANNOTATION</scope>
    <source>
        <strain>ATCC 204508 / S288c</strain>
    </source>
</reference>
<reference key="3">
    <citation type="journal article" date="2022" name="Genetics">
        <title>New data and collaborations at the Saccharomyces Genome Database: updated reference genome, alleles, and the Alliance of Genome Resources.</title>
        <authorList>
            <person name="Engel S.R."/>
            <person name="Wong E.D."/>
            <person name="Nash R.S."/>
            <person name="Aleksander S."/>
            <person name="Alexander M."/>
            <person name="Douglass E."/>
            <person name="Karra K."/>
            <person name="Miyasato S.R."/>
            <person name="Simison M."/>
            <person name="Skrzypek M.S."/>
            <person name="Weng S."/>
            <person name="Cherry J.M."/>
        </authorList>
    </citation>
    <scope>GENOME REANNOTATION</scope>
    <source>
        <strain>ATCC 204508 / S288c</strain>
    </source>
</reference>
<reference key="4">
    <citation type="journal article" date="2023" name="Cell Syst.">
        <title>A vast evolutionarily transient translatome contributes to phenotype and fitness.</title>
        <authorList>
            <person name="Wacholder A."/>
            <person name="Parikh S.B."/>
            <person name="Coelho N.C."/>
            <person name="Acar O."/>
            <person name="Houghton C."/>
            <person name="Chou L."/>
            <person name="Carvunis A.R."/>
        </authorList>
    </citation>
    <scope>IDENTIFICATION</scope>
    <scope>DISRUPTION PHENOTYPE</scope>
</reference>
<evidence type="ECO:0000269" key="1">
    <source>
    </source>
</evidence>
<evidence type="ECO:0000305" key="2"/>
<evidence type="ECO:0000312" key="3">
    <source>
        <dbReference type="SGD" id="S000350096"/>
    </source>
</evidence>
<keyword id="KW-1185">Reference proteome</keyword>
<feature type="chain" id="PRO_0000461172" description="Uncharacterized protein YDL204W-A">
    <location>
        <begin position="1"/>
        <end position="50"/>
    </location>
</feature>
<comment type="disruption phenotype">
    <text evidence="1">Confers resistance to fluconazole and to osmotic stress.</text>
</comment>
<proteinExistence type="predicted"/>
<organism>
    <name type="scientific">Saccharomyces cerevisiae (strain ATCC 204508 / S288c)</name>
    <name type="common">Baker's yeast</name>
    <dbReference type="NCBI Taxonomy" id="559292"/>
    <lineage>
        <taxon>Eukaryota</taxon>
        <taxon>Fungi</taxon>
        <taxon>Dikarya</taxon>
        <taxon>Ascomycota</taxon>
        <taxon>Saccharomycotina</taxon>
        <taxon>Saccharomycetes</taxon>
        <taxon>Saccharomycetales</taxon>
        <taxon>Saccharomycetaceae</taxon>
        <taxon>Saccharomyces</taxon>
    </lineage>
</organism>
<gene>
    <name evidence="3" type="ordered locus">YDL204W-A</name>
</gene>